<feature type="chain" id="PRO_0000428984" description="PTS system fructose-specific EIIC component">
    <location>
        <begin position="1"/>
        <end position="375"/>
    </location>
</feature>
<feature type="transmembrane region" description="Helical" evidence="1">
    <location>
        <begin position="24"/>
        <end position="44"/>
    </location>
</feature>
<feature type="transmembrane region" description="Helical" evidence="1">
    <location>
        <begin position="68"/>
        <end position="88"/>
    </location>
</feature>
<feature type="transmembrane region" description="Helical" evidence="1">
    <location>
        <begin position="93"/>
        <end position="113"/>
    </location>
</feature>
<feature type="transmembrane region" description="Helical" evidence="1">
    <location>
        <begin position="122"/>
        <end position="142"/>
    </location>
</feature>
<feature type="transmembrane region" description="Helical" evidence="1">
    <location>
        <begin position="160"/>
        <end position="180"/>
    </location>
</feature>
<feature type="transmembrane region" description="Helical" evidence="1">
    <location>
        <begin position="203"/>
        <end position="223"/>
    </location>
</feature>
<feature type="transmembrane region" description="Helical" evidence="1">
    <location>
        <begin position="238"/>
        <end position="258"/>
    </location>
</feature>
<feature type="transmembrane region" description="Helical" evidence="1">
    <location>
        <begin position="279"/>
        <end position="299"/>
    </location>
</feature>
<feature type="transmembrane region" description="Helical" evidence="1">
    <location>
        <begin position="301"/>
        <end position="321"/>
    </location>
</feature>
<feature type="transmembrane region" description="Helical" evidence="1">
    <location>
        <begin position="340"/>
        <end position="360"/>
    </location>
</feature>
<feature type="domain" description="PTS EIIC type-2" evidence="1">
    <location>
        <begin position="16"/>
        <end position="370"/>
    </location>
</feature>
<protein>
    <recommendedName>
        <fullName evidence="4">PTS system fructose-specific EIIC component</fullName>
    </recommendedName>
    <alternativeName>
        <fullName evidence="4">EIIC-Fru</fullName>
    </alternativeName>
    <alternativeName>
        <fullName evidence="4">Fructose permease IIC</fullName>
    </alternativeName>
</protein>
<organism>
    <name type="scientific">Haloferax volcanii (strain ATCC 29605 / DSM 3757 / JCM 8879 / NBRC 14742 / NCIMB 2012 / VKM B-1768 / DS2)</name>
    <name type="common">Halobacterium volcanii</name>
    <dbReference type="NCBI Taxonomy" id="309800"/>
    <lineage>
        <taxon>Archaea</taxon>
        <taxon>Methanobacteriati</taxon>
        <taxon>Methanobacteriota</taxon>
        <taxon>Stenosarchaea group</taxon>
        <taxon>Halobacteria</taxon>
        <taxon>Halobacteriales</taxon>
        <taxon>Haloferacaceae</taxon>
        <taxon>Haloferax</taxon>
    </lineage>
</organism>
<sequence length="375" mass="38141">MANDAEDAVRSYLTSVKEDLMTGVSFMIPFVTIGGIFLALGYAVASLSNNVQDVFNSTGTAGWFLAQIGVAGLTLMVPVLGAYIAYAIADRPGLAPGFILSYIIQQGNVLQAAGDVIGLQGGSAGAGYLGAIVAGFLAGIVARWFKQRDVPEFIAPMMPVLLIPVATTAVLTPVMLFVLGVPISIANAGLTEFLSNMQGGGQAILLGGILGAMMAADMGGPINKVAYVFSVGLISEGVTAPMAAVMIAGMVPPIGLALSNFIAPQKYAAEMYENAKSGVLLGFSFITEGAIPYAAADPARVIPSVVAGSAVAGAASMALGVNMPAPHGGIFVVPLSNQPFMFIACILLGSIVTAVIATAIKPNFDAKMAAQSSDD</sequence>
<accession>D4GYE5</accession>
<reference key="1">
    <citation type="journal article" date="2010" name="PLoS ONE">
        <title>The complete genome sequence of Haloferax volcanii DS2, a model archaeon.</title>
        <authorList>
            <person name="Hartman A.L."/>
            <person name="Norais C."/>
            <person name="Badger J.H."/>
            <person name="Delmas S."/>
            <person name="Haldenby S."/>
            <person name="Madupu R."/>
            <person name="Robinson J."/>
            <person name="Khouri H."/>
            <person name="Ren Q."/>
            <person name="Lowe T.M."/>
            <person name="Maupin-Furlow J."/>
            <person name="Pohlschroder M."/>
            <person name="Daniels C."/>
            <person name="Pfeiffer F."/>
            <person name="Allers T."/>
            <person name="Eisen J.A."/>
        </authorList>
    </citation>
    <scope>NUCLEOTIDE SEQUENCE [LARGE SCALE GENOMIC DNA]</scope>
    <source>
        <strain>ATCC 29605 / DSM 3757 / JCM 8879 / NBRC 14742 / NCIMB 2012 / VKM B-1768 / DS2</strain>
    </source>
</reference>
<reference key="2">
    <citation type="journal article" date="2014" name="PLoS Genet.">
        <title>Phylogenetically driven sequencing of extremely halophilic archaea reveals strategies for static and dynamic osmo-response.</title>
        <authorList>
            <person name="Becker E.A."/>
            <person name="Seitzer P.M."/>
            <person name="Tritt A."/>
            <person name="Larsen D."/>
            <person name="Krusor M."/>
            <person name="Yao A.I."/>
            <person name="Wu D."/>
            <person name="Madern D."/>
            <person name="Eisen J.A."/>
            <person name="Darling A.E."/>
            <person name="Facciotti M.T."/>
        </authorList>
    </citation>
    <scope>NUCLEOTIDE SEQUENCE [LARGE SCALE GENOMIC DNA]</scope>
    <source>
        <strain>ATCC 29605 / DSM 3757 / JCM 8879 / NBRC 14742 / NCIMB 2012 / VKM B-1768 / DS2</strain>
    </source>
</reference>
<reference key="3">
    <citation type="journal article" date="2012" name="J. Bacteriol.">
        <title>Fructose degradation in the haloarchaeon Haloferax volcanii involves a bacterial type phosphoenolpyruvate-dependent phosphotransferase system, fructose-1-phosphate kinase, and class II fructose-1,6-bisphosphate aldolase.</title>
        <authorList>
            <person name="Pickl A."/>
            <person name="Johnsen U."/>
            <person name="Schoenheit P."/>
        </authorList>
    </citation>
    <scope>IDENTIFICATION</scope>
    <scope>INDUCTION</scope>
    <scope>FUNCTION</scope>
    <scope>DISRUPTION PHENOTYPE</scope>
    <source>
        <strain>DS2 / DS70</strain>
    </source>
</reference>
<dbReference type="EMBL" id="CP001956">
    <property type="protein sequence ID" value="ADE05002.1"/>
    <property type="molecule type" value="Genomic_DNA"/>
</dbReference>
<dbReference type="EMBL" id="AOHU01000090">
    <property type="protein sequence ID" value="ELY28263.1"/>
    <property type="molecule type" value="Genomic_DNA"/>
</dbReference>
<dbReference type="RefSeq" id="WP_004043436.1">
    <property type="nucleotide sequence ID" value="NC_013967.1"/>
</dbReference>
<dbReference type="SMR" id="D4GYE5"/>
<dbReference type="STRING" id="309800.HVO_1499"/>
<dbReference type="TCDB" id="4.A.2.1.15">
    <property type="family name" value="the pts fructose-mannitol (fru) family"/>
</dbReference>
<dbReference type="PaxDb" id="309800-C498_11236"/>
<dbReference type="EnsemblBacteria" id="ADE05002">
    <property type="protein sequence ID" value="ADE05002"/>
    <property type="gene ID" value="HVO_1499"/>
</dbReference>
<dbReference type="GeneID" id="8924700"/>
<dbReference type="KEGG" id="hvo:HVO_1499"/>
<dbReference type="PATRIC" id="fig|309800.29.peg.2141"/>
<dbReference type="eggNOG" id="arCOG10196">
    <property type="taxonomic scope" value="Archaea"/>
</dbReference>
<dbReference type="HOGENOM" id="CLU_013155_0_1_2"/>
<dbReference type="OrthoDB" id="201905at2157"/>
<dbReference type="Proteomes" id="UP000008243">
    <property type="component" value="Chromosome"/>
</dbReference>
<dbReference type="Proteomes" id="UP000011532">
    <property type="component" value="Unassembled WGS sequence"/>
</dbReference>
<dbReference type="GO" id="GO:0005886">
    <property type="term" value="C:plasma membrane"/>
    <property type="evidence" value="ECO:0007669"/>
    <property type="project" value="UniProtKB-SubCell"/>
</dbReference>
<dbReference type="GO" id="GO:0005351">
    <property type="term" value="F:carbohydrate:proton symporter activity"/>
    <property type="evidence" value="ECO:0007669"/>
    <property type="project" value="InterPro"/>
</dbReference>
<dbReference type="GO" id="GO:0008982">
    <property type="term" value="F:protein-N(PI)-phosphohistidine-sugar phosphotransferase activity"/>
    <property type="evidence" value="ECO:0007669"/>
    <property type="project" value="InterPro"/>
</dbReference>
<dbReference type="GO" id="GO:0090563">
    <property type="term" value="F:protein-phosphocysteine-sugar phosphotransferase activity"/>
    <property type="evidence" value="ECO:0007669"/>
    <property type="project" value="TreeGrafter"/>
</dbReference>
<dbReference type="GO" id="GO:0009401">
    <property type="term" value="P:phosphoenolpyruvate-dependent sugar phosphotransferase system"/>
    <property type="evidence" value="ECO:0007669"/>
    <property type="project" value="UniProtKB-KW"/>
</dbReference>
<dbReference type="InterPro" id="IPR050864">
    <property type="entry name" value="Bacterial_PTS_Sugar_Transport"/>
</dbReference>
<dbReference type="InterPro" id="IPR003352">
    <property type="entry name" value="PTS_EIIC"/>
</dbReference>
<dbReference type="InterPro" id="IPR013014">
    <property type="entry name" value="PTS_EIIC_2"/>
</dbReference>
<dbReference type="InterPro" id="IPR006327">
    <property type="entry name" value="PTS_IIC_fruc"/>
</dbReference>
<dbReference type="NCBIfam" id="TIGR01427">
    <property type="entry name" value="PTS_IIC_fructo"/>
    <property type="match status" value="1"/>
</dbReference>
<dbReference type="PANTHER" id="PTHR30505">
    <property type="entry name" value="FRUCTOSE-LIKE PERMEASE"/>
    <property type="match status" value="1"/>
</dbReference>
<dbReference type="PANTHER" id="PTHR30505:SF0">
    <property type="entry name" value="FRUCTOSE-LIKE PTS SYSTEM EIIBC COMPONENT-RELATED"/>
    <property type="match status" value="1"/>
</dbReference>
<dbReference type="Pfam" id="PF02378">
    <property type="entry name" value="PTS_EIIC"/>
    <property type="match status" value="1"/>
</dbReference>
<dbReference type="PROSITE" id="PS51104">
    <property type="entry name" value="PTS_EIIC_TYPE_2"/>
    <property type="match status" value="1"/>
</dbReference>
<evidence type="ECO:0000255" key="1">
    <source>
        <dbReference type="PROSITE-ProRule" id="PRU00427"/>
    </source>
</evidence>
<evidence type="ECO:0000269" key="2">
    <source>
    </source>
</evidence>
<evidence type="ECO:0000303" key="3">
    <source>
    </source>
</evidence>
<evidence type="ECO:0000303" key="4">
    <source>
    </source>
</evidence>
<evidence type="ECO:0000305" key="5"/>
<name>PTFC_HALVD</name>
<gene>
    <name evidence="3" type="primary">ptfC</name>
    <name type="ordered locus">HVO_1499</name>
    <name type="ORF">C498_11236</name>
</gene>
<proteinExistence type="evidence at transcript level"/>
<keyword id="KW-1003">Cell membrane</keyword>
<keyword id="KW-0472">Membrane</keyword>
<keyword id="KW-0598">Phosphotransferase system</keyword>
<keyword id="KW-1185">Reference proteome</keyword>
<keyword id="KW-0762">Sugar transport</keyword>
<keyword id="KW-0812">Transmembrane</keyword>
<keyword id="KW-1133">Transmembrane helix</keyword>
<keyword id="KW-0813">Transport</keyword>
<comment type="function">
    <text evidence="2">The phosphoenolpyruvate-dependent sugar phosphotransferase system (sugar PTS), a major carbohydrate active transport system, catalyzes the phosphorylation of incoming sugar substrates concomitantly with their translocation across the cell membrane. The enzyme II PtfABC PTS system is involved in fructose transport.</text>
</comment>
<comment type="subcellular location">
    <subcellularLocation>
        <location evidence="1">Cell membrane</location>
        <topology evidence="1">Multi-pass membrane protein</topology>
    </subcellularLocation>
</comment>
<comment type="induction">
    <text evidence="2">Expression is highly up-regulated in presence of fructose.</text>
</comment>
<comment type="domain">
    <text evidence="1">The EIIC type-2 domain forms the PTS system translocation channel and contains the specific substrate-binding site.</text>
</comment>
<comment type="disruption phenotype">
    <text evidence="2">Cells lacking this gene are unable to grow on fructose. Growth on glucose is unaffected.</text>
</comment>
<comment type="miscellaneous">
    <text evidence="5">PTS-type transport systems are very rare in archaea.</text>
</comment>